<accession>B6ENU1</accession>
<reference key="1">
    <citation type="journal article" date="2008" name="BMC Genomics">
        <title>The genome sequence of the fish pathogen Aliivibrio salmonicida strain LFI1238 shows extensive evidence of gene decay.</title>
        <authorList>
            <person name="Hjerde E."/>
            <person name="Lorentzen M.S."/>
            <person name="Holden M.T."/>
            <person name="Seeger K."/>
            <person name="Paulsen S."/>
            <person name="Bason N."/>
            <person name="Churcher C."/>
            <person name="Harris D."/>
            <person name="Norbertczak H."/>
            <person name="Quail M.A."/>
            <person name="Sanders S."/>
            <person name="Thurston S."/>
            <person name="Parkhill J."/>
            <person name="Willassen N.P."/>
            <person name="Thomson N.R."/>
        </authorList>
    </citation>
    <scope>NUCLEOTIDE SEQUENCE [LARGE SCALE GENOMIC DNA]</scope>
    <source>
        <strain>LFI1238</strain>
    </source>
</reference>
<protein>
    <recommendedName>
        <fullName evidence="1">Glycerol-3-phosphate acyltransferase</fullName>
        <shortName evidence="1">GPAT</shortName>
        <ecNumber evidence="1">2.3.1.15</ecNumber>
    </recommendedName>
</protein>
<gene>
    <name evidence="1" type="primary">plsB</name>
    <name type="ordered locus">VSAL_I2894</name>
</gene>
<organism>
    <name type="scientific">Aliivibrio salmonicida (strain LFI1238)</name>
    <name type="common">Vibrio salmonicida (strain LFI1238)</name>
    <dbReference type="NCBI Taxonomy" id="316275"/>
    <lineage>
        <taxon>Bacteria</taxon>
        <taxon>Pseudomonadati</taxon>
        <taxon>Pseudomonadota</taxon>
        <taxon>Gammaproteobacteria</taxon>
        <taxon>Vibrionales</taxon>
        <taxon>Vibrionaceae</taxon>
        <taxon>Aliivibrio</taxon>
    </lineage>
</organism>
<evidence type="ECO:0000255" key="1">
    <source>
        <dbReference type="HAMAP-Rule" id="MF_00393"/>
    </source>
</evidence>
<proteinExistence type="inferred from homology"/>
<comment type="catalytic activity">
    <reaction evidence="1">
        <text>sn-glycerol 3-phosphate + an acyl-CoA = a 1-acyl-sn-glycero-3-phosphate + CoA</text>
        <dbReference type="Rhea" id="RHEA:15325"/>
        <dbReference type="ChEBI" id="CHEBI:57287"/>
        <dbReference type="ChEBI" id="CHEBI:57597"/>
        <dbReference type="ChEBI" id="CHEBI:57970"/>
        <dbReference type="ChEBI" id="CHEBI:58342"/>
        <dbReference type="EC" id="2.3.1.15"/>
    </reaction>
</comment>
<comment type="pathway">
    <text evidence="1">Phospholipid metabolism; CDP-diacylglycerol biosynthesis; CDP-diacylglycerol from sn-glycerol 3-phosphate: step 1/3.</text>
</comment>
<comment type="subcellular location">
    <subcellularLocation>
        <location evidence="1">Cell inner membrane</location>
        <topology evidence="1">Peripheral membrane protein</topology>
        <orientation evidence="1">Cytoplasmic side</orientation>
    </subcellularLocation>
</comment>
<comment type="domain">
    <text evidence="1">The HXXXXD motif is essential for acyltransferase activity and may constitute the binding site for the phosphate moiety of the glycerol-3-phosphate.</text>
</comment>
<comment type="similarity">
    <text evidence="1">Belongs to the GPAT/DAPAT family.</text>
</comment>
<dbReference type="EC" id="2.3.1.15" evidence="1"/>
<dbReference type="EMBL" id="FM178379">
    <property type="protein sequence ID" value="CAQ80578.1"/>
    <property type="molecule type" value="Genomic_DNA"/>
</dbReference>
<dbReference type="RefSeq" id="WP_012551312.1">
    <property type="nucleotide sequence ID" value="NC_011312.1"/>
</dbReference>
<dbReference type="SMR" id="B6ENU1"/>
<dbReference type="KEGG" id="vsa:VSAL_I2894"/>
<dbReference type="eggNOG" id="COG2937">
    <property type="taxonomic scope" value="Bacteria"/>
</dbReference>
<dbReference type="HOGENOM" id="CLU_015407_0_0_6"/>
<dbReference type="UniPathway" id="UPA00557">
    <property type="reaction ID" value="UER00612"/>
</dbReference>
<dbReference type="Proteomes" id="UP000001730">
    <property type="component" value="Chromosome 1"/>
</dbReference>
<dbReference type="GO" id="GO:0005886">
    <property type="term" value="C:plasma membrane"/>
    <property type="evidence" value="ECO:0007669"/>
    <property type="project" value="UniProtKB-SubCell"/>
</dbReference>
<dbReference type="GO" id="GO:0004366">
    <property type="term" value="F:glycerol-3-phosphate O-acyltransferase activity"/>
    <property type="evidence" value="ECO:0007669"/>
    <property type="project" value="UniProtKB-UniRule"/>
</dbReference>
<dbReference type="GO" id="GO:0016024">
    <property type="term" value="P:CDP-diacylglycerol biosynthetic process"/>
    <property type="evidence" value="ECO:0007669"/>
    <property type="project" value="UniProtKB-UniRule"/>
</dbReference>
<dbReference type="GO" id="GO:0006631">
    <property type="term" value="P:fatty acid metabolic process"/>
    <property type="evidence" value="ECO:0007669"/>
    <property type="project" value="TreeGrafter"/>
</dbReference>
<dbReference type="CDD" id="cd07993">
    <property type="entry name" value="LPLAT_DHAPAT-like"/>
    <property type="match status" value="1"/>
</dbReference>
<dbReference type="HAMAP" id="MF_00393">
    <property type="entry name" value="Glyc3P_acyltrans"/>
    <property type="match status" value="1"/>
</dbReference>
<dbReference type="InterPro" id="IPR022284">
    <property type="entry name" value="GPAT/DHAPAT"/>
</dbReference>
<dbReference type="InterPro" id="IPR045520">
    <property type="entry name" value="GPAT/DHAPAT_C"/>
</dbReference>
<dbReference type="InterPro" id="IPR041728">
    <property type="entry name" value="GPAT/DHAPAT_LPLAT"/>
</dbReference>
<dbReference type="InterPro" id="IPR028354">
    <property type="entry name" value="GPAT_PlsB"/>
</dbReference>
<dbReference type="InterPro" id="IPR002123">
    <property type="entry name" value="Plipid/glycerol_acylTrfase"/>
</dbReference>
<dbReference type="NCBIfam" id="TIGR03703">
    <property type="entry name" value="plsB"/>
    <property type="match status" value="1"/>
</dbReference>
<dbReference type="NCBIfam" id="NF003441">
    <property type="entry name" value="PRK04974.1"/>
    <property type="match status" value="1"/>
</dbReference>
<dbReference type="PANTHER" id="PTHR12563:SF17">
    <property type="entry name" value="DIHYDROXYACETONE PHOSPHATE ACYLTRANSFERASE"/>
    <property type="match status" value="1"/>
</dbReference>
<dbReference type="PANTHER" id="PTHR12563">
    <property type="entry name" value="GLYCEROL-3-PHOSPHATE ACYLTRANSFERASE"/>
    <property type="match status" value="1"/>
</dbReference>
<dbReference type="Pfam" id="PF01553">
    <property type="entry name" value="Acyltransferase"/>
    <property type="match status" value="1"/>
</dbReference>
<dbReference type="Pfam" id="PF19277">
    <property type="entry name" value="GPAT_C"/>
    <property type="match status" value="1"/>
</dbReference>
<dbReference type="PIRSF" id="PIRSF500064">
    <property type="entry name" value="GPAT"/>
    <property type="match status" value="1"/>
</dbReference>
<dbReference type="PIRSF" id="PIRSF000437">
    <property type="entry name" value="GPAT_DHAPAT"/>
    <property type="match status" value="1"/>
</dbReference>
<dbReference type="SMART" id="SM00563">
    <property type="entry name" value="PlsC"/>
    <property type="match status" value="1"/>
</dbReference>
<dbReference type="SUPFAM" id="SSF69593">
    <property type="entry name" value="Glycerol-3-phosphate (1)-acyltransferase"/>
    <property type="match status" value="1"/>
</dbReference>
<sequence length="807" mass="91258">MSTGQTIYHSLLKLPLSVMVKSTPIPSNPIEDLNIDIERPIIYALPFRSHVDLLTLQKSAKELGLPDPLSPIEIDGVSYPRYVFTSIGPKMFDTDDDLPQESLDLFKIVLKHHADNPDADFQLIPTSILWGRRPGKEGTSRPHLMPLNGPQKFVTLIKAGRDSTVRISPVVSLRYMADNHGADDAIAHKLARVAKIHFSRQKLAASGPNLPNRQALFNRLLKSQAIEKVILEEARIRNVDVEKVRKEAMGIMEEIATNFSYSLIKNGNRILKWLWNRLYQGLNINNAATVRKLAQEGHEIVYVPCHRSHMDYLLLSYVLYHEGLVPPHIAAGINLNFFPAGPIFRRGGAFFIRRSFKGNRLYSTIFREYLAELFAKGYSVEYFSEGGRSRTGRLLQAKTGMLAMTVQAMLRGLNRPVTLVPVYIGYEHVMEVTTYAKELQGKRKEKENAGQVLRTLRKLRNFGQGYVNFGEPISLNHYLNEHAPNWSESINPIEPQKPEWMSPVVNGIANKMMTHINDAVAANALTLCATALLAARQRALSKEDLTEQLDCYLQLLRNIPYSNTATVPTQDAEALLEHAIALDKFVIEKDTLGEIISLDRNQSILMTYYRNNIIHLFALPSLIAKLVVQYRSISIDNVQAQIQQIYPFLKAELFLHYDESELNDVVSQHIDELVRQKLIERENDVLQLNATNILKVHLLAHTISETLQRYAIALTHLQASPKLGKNDLEEQSQIMAQRLSRLHGINAPEFFDKGVFGILFNTLKAEGYLNSDGVAVISKVEPFSRDMSRLLNPEIKLTIQAVMTKED</sequence>
<name>PLSB_ALISL</name>
<feature type="chain" id="PRO_1000123073" description="Glycerol-3-phosphate acyltransferase">
    <location>
        <begin position="1"/>
        <end position="807"/>
    </location>
</feature>
<feature type="short sequence motif" description="HXXXXD motif">
    <location>
        <begin position="305"/>
        <end position="310"/>
    </location>
</feature>
<keyword id="KW-0012">Acyltransferase</keyword>
<keyword id="KW-0997">Cell inner membrane</keyword>
<keyword id="KW-1003">Cell membrane</keyword>
<keyword id="KW-0444">Lipid biosynthesis</keyword>
<keyword id="KW-0443">Lipid metabolism</keyword>
<keyword id="KW-0472">Membrane</keyword>
<keyword id="KW-0594">Phospholipid biosynthesis</keyword>
<keyword id="KW-1208">Phospholipid metabolism</keyword>
<keyword id="KW-0808">Transferase</keyword>